<feature type="chain" id="PRO_0000323827" description="Uridylate kinase">
    <location>
        <begin position="1"/>
        <end position="243"/>
    </location>
</feature>
<feature type="binding site" evidence="1">
    <location>
        <begin position="18"/>
        <end position="21"/>
    </location>
    <ligand>
        <name>ATP</name>
        <dbReference type="ChEBI" id="CHEBI:30616"/>
    </ligand>
</feature>
<feature type="binding site" evidence="1">
    <location>
        <position position="59"/>
    </location>
    <ligand>
        <name>UMP</name>
        <dbReference type="ChEBI" id="CHEBI:57865"/>
    </ligand>
</feature>
<feature type="binding site" evidence="1">
    <location>
        <position position="60"/>
    </location>
    <ligand>
        <name>ATP</name>
        <dbReference type="ChEBI" id="CHEBI:30616"/>
    </ligand>
</feature>
<feature type="binding site" evidence="1">
    <location>
        <position position="64"/>
    </location>
    <ligand>
        <name>ATP</name>
        <dbReference type="ChEBI" id="CHEBI:30616"/>
    </ligand>
</feature>
<feature type="binding site" evidence="1">
    <location>
        <position position="79"/>
    </location>
    <ligand>
        <name>UMP</name>
        <dbReference type="ChEBI" id="CHEBI:57865"/>
    </ligand>
</feature>
<feature type="binding site" evidence="1">
    <location>
        <begin position="140"/>
        <end position="147"/>
    </location>
    <ligand>
        <name>UMP</name>
        <dbReference type="ChEBI" id="CHEBI:57865"/>
    </ligand>
</feature>
<feature type="binding site" evidence="1">
    <location>
        <position position="173"/>
    </location>
    <ligand>
        <name>ATP</name>
        <dbReference type="ChEBI" id="CHEBI:30616"/>
    </ligand>
</feature>
<feature type="binding site" evidence="1">
    <location>
        <position position="176"/>
    </location>
    <ligand>
        <name>ATP</name>
        <dbReference type="ChEBI" id="CHEBI:30616"/>
    </ligand>
</feature>
<proteinExistence type="inferred from homology"/>
<name>PYRH_CORDI</name>
<evidence type="ECO:0000255" key="1">
    <source>
        <dbReference type="HAMAP-Rule" id="MF_01220"/>
    </source>
</evidence>
<evidence type="ECO:0000305" key="2"/>
<organism>
    <name type="scientific">Corynebacterium diphtheriae (strain ATCC 700971 / NCTC 13129 / Biotype gravis)</name>
    <dbReference type="NCBI Taxonomy" id="257309"/>
    <lineage>
        <taxon>Bacteria</taxon>
        <taxon>Bacillati</taxon>
        <taxon>Actinomycetota</taxon>
        <taxon>Actinomycetes</taxon>
        <taxon>Mycobacteriales</taxon>
        <taxon>Corynebacteriaceae</taxon>
        <taxon>Corynebacterium</taxon>
    </lineage>
</organism>
<protein>
    <recommendedName>
        <fullName evidence="1">Uridylate kinase</fullName>
        <shortName evidence="1">UK</shortName>
        <ecNumber evidence="1">2.7.4.22</ecNumber>
    </recommendedName>
    <alternativeName>
        <fullName evidence="1">Uridine monophosphate kinase</fullName>
        <shortName evidence="1">UMP kinase</shortName>
        <shortName evidence="1">UMPK</shortName>
    </alternativeName>
</protein>
<accession>Q6NGK6</accession>
<reference key="1">
    <citation type="journal article" date="2003" name="Nucleic Acids Res.">
        <title>The complete genome sequence and analysis of Corynebacterium diphtheriae NCTC13129.</title>
        <authorList>
            <person name="Cerdeno-Tarraga A.-M."/>
            <person name="Efstratiou A."/>
            <person name="Dover L.G."/>
            <person name="Holden M.T.G."/>
            <person name="Pallen M.J."/>
            <person name="Bentley S.D."/>
            <person name="Besra G.S."/>
            <person name="Churcher C.M."/>
            <person name="James K.D."/>
            <person name="De Zoysa A."/>
            <person name="Chillingworth T."/>
            <person name="Cronin A."/>
            <person name="Dowd L."/>
            <person name="Feltwell T."/>
            <person name="Hamlin N."/>
            <person name="Holroyd S."/>
            <person name="Jagels K."/>
            <person name="Moule S."/>
            <person name="Quail M.A."/>
            <person name="Rabbinowitsch E."/>
            <person name="Rutherford K.M."/>
            <person name="Thomson N.R."/>
            <person name="Unwin L."/>
            <person name="Whitehead S."/>
            <person name="Barrell B.G."/>
            <person name="Parkhill J."/>
        </authorList>
    </citation>
    <scope>NUCLEOTIDE SEQUENCE [LARGE SCALE GENOMIC DNA]</scope>
    <source>
        <strain>ATCC 700971 / NCTC 13129 / Biotype gravis</strain>
    </source>
</reference>
<keyword id="KW-0067">ATP-binding</keyword>
<keyword id="KW-0963">Cytoplasm</keyword>
<keyword id="KW-0418">Kinase</keyword>
<keyword id="KW-0547">Nucleotide-binding</keyword>
<keyword id="KW-0665">Pyrimidine biosynthesis</keyword>
<keyword id="KW-1185">Reference proteome</keyword>
<keyword id="KW-0808">Transferase</keyword>
<sequence>MTEGVQNERTGYKRVMLKLGGEMFGGGAVGIDPDVVQNVARQIASVARTGAEIAVVIGGGNFFRGAQLQQRGLDRNRSDYMGMLGTVMNCLALQDFLEQEGIDCRVQTAINMAQVAEPYLPLRAKRHLEKGRVVIFGAGMGMPYFSTDTTAAQRALEIDCEVLLMAKAVDGVYDDDPRTNPDAQLFHQITPREVIEKGLKVADATAFSLCMDNKMPILVFNLLTEGNIARAVAGEQIGTLVQS</sequence>
<comment type="function">
    <text evidence="1">Catalyzes the reversible phosphorylation of UMP to UDP.</text>
</comment>
<comment type="catalytic activity">
    <reaction evidence="1">
        <text>UMP + ATP = UDP + ADP</text>
        <dbReference type="Rhea" id="RHEA:24400"/>
        <dbReference type="ChEBI" id="CHEBI:30616"/>
        <dbReference type="ChEBI" id="CHEBI:57865"/>
        <dbReference type="ChEBI" id="CHEBI:58223"/>
        <dbReference type="ChEBI" id="CHEBI:456216"/>
        <dbReference type="EC" id="2.7.4.22"/>
    </reaction>
</comment>
<comment type="activity regulation">
    <text evidence="1">Inhibited by UTP.</text>
</comment>
<comment type="pathway">
    <text evidence="1">Pyrimidine metabolism; CTP biosynthesis via de novo pathway; UDP from UMP (UMPK route): step 1/1.</text>
</comment>
<comment type="subunit">
    <text evidence="1">Homohexamer.</text>
</comment>
<comment type="subcellular location">
    <subcellularLocation>
        <location evidence="1">Cytoplasm</location>
    </subcellularLocation>
</comment>
<comment type="similarity">
    <text evidence="1">Belongs to the UMP kinase family.</text>
</comment>
<comment type="sequence caution" evidence="2">
    <conflict type="erroneous initiation">
        <sequence resource="EMBL-CDS" id="CAE50033"/>
    </conflict>
</comment>
<dbReference type="EC" id="2.7.4.22" evidence="1"/>
<dbReference type="EMBL" id="BX248358">
    <property type="protein sequence ID" value="CAE50033.1"/>
    <property type="status" value="ALT_INIT"/>
    <property type="molecule type" value="Genomic_DNA"/>
</dbReference>
<dbReference type="RefSeq" id="WP_014302074.1">
    <property type="nucleotide sequence ID" value="NC_002935.2"/>
</dbReference>
<dbReference type="SMR" id="Q6NGK6"/>
<dbReference type="STRING" id="257309.DIP1506"/>
<dbReference type="KEGG" id="cdi:DIP1506"/>
<dbReference type="HOGENOM" id="CLU_033861_0_0_11"/>
<dbReference type="UniPathway" id="UPA00159">
    <property type="reaction ID" value="UER00275"/>
</dbReference>
<dbReference type="Proteomes" id="UP000002198">
    <property type="component" value="Chromosome"/>
</dbReference>
<dbReference type="GO" id="GO:0005737">
    <property type="term" value="C:cytoplasm"/>
    <property type="evidence" value="ECO:0007669"/>
    <property type="project" value="UniProtKB-SubCell"/>
</dbReference>
<dbReference type="GO" id="GO:0005524">
    <property type="term" value="F:ATP binding"/>
    <property type="evidence" value="ECO:0007669"/>
    <property type="project" value="UniProtKB-KW"/>
</dbReference>
<dbReference type="GO" id="GO:0033862">
    <property type="term" value="F:UMP kinase activity"/>
    <property type="evidence" value="ECO:0007669"/>
    <property type="project" value="UniProtKB-EC"/>
</dbReference>
<dbReference type="GO" id="GO:0044210">
    <property type="term" value="P:'de novo' CTP biosynthetic process"/>
    <property type="evidence" value="ECO:0007669"/>
    <property type="project" value="UniProtKB-UniRule"/>
</dbReference>
<dbReference type="GO" id="GO:0006225">
    <property type="term" value="P:UDP biosynthetic process"/>
    <property type="evidence" value="ECO:0007669"/>
    <property type="project" value="TreeGrafter"/>
</dbReference>
<dbReference type="CDD" id="cd04254">
    <property type="entry name" value="AAK_UMPK-PyrH-Ec"/>
    <property type="match status" value="1"/>
</dbReference>
<dbReference type="FunFam" id="3.40.1160.10:FF:000001">
    <property type="entry name" value="Uridylate kinase"/>
    <property type="match status" value="1"/>
</dbReference>
<dbReference type="Gene3D" id="3.40.1160.10">
    <property type="entry name" value="Acetylglutamate kinase-like"/>
    <property type="match status" value="1"/>
</dbReference>
<dbReference type="HAMAP" id="MF_01220_B">
    <property type="entry name" value="PyrH_B"/>
    <property type="match status" value="1"/>
</dbReference>
<dbReference type="InterPro" id="IPR036393">
    <property type="entry name" value="AceGlu_kinase-like_sf"/>
</dbReference>
<dbReference type="InterPro" id="IPR001048">
    <property type="entry name" value="Asp/Glu/Uridylate_kinase"/>
</dbReference>
<dbReference type="InterPro" id="IPR011817">
    <property type="entry name" value="Uridylate_kinase"/>
</dbReference>
<dbReference type="InterPro" id="IPR015963">
    <property type="entry name" value="Uridylate_kinase_bac"/>
</dbReference>
<dbReference type="NCBIfam" id="TIGR02075">
    <property type="entry name" value="pyrH_bact"/>
    <property type="match status" value="1"/>
</dbReference>
<dbReference type="PANTHER" id="PTHR42833">
    <property type="entry name" value="URIDYLATE KINASE"/>
    <property type="match status" value="1"/>
</dbReference>
<dbReference type="PANTHER" id="PTHR42833:SF4">
    <property type="entry name" value="URIDYLATE KINASE PUMPKIN, CHLOROPLASTIC"/>
    <property type="match status" value="1"/>
</dbReference>
<dbReference type="Pfam" id="PF00696">
    <property type="entry name" value="AA_kinase"/>
    <property type="match status" value="1"/>
</dbReference>
<dbReference type="PIRSF" id="PIRSF005650">
    <property type="entry name" value="Uridylate_kin"/>
    <property type="match status" value="1"/>
</dbReference>
<dbReference type="SUPFAM" id="SSF53633">
    <property type="entry name" value="Carbamate kinase-like"/>
    <property type="match status" value="1"/>
</dbReference>
<gene>
    <name evidence="1" type="primary">pyrH</name>
    <name type="ordered locus">DIP1506</name>
</gene>